<organism>
    <name type="scientific">Shigella sonnei (strain Ss046)</name>
    <dbReference type="NCBI Taxonomy" id="300269"/>
    <lineage>
        <taxon>Bacteria</taxon>
        <taxon>Pseudomonadati</taxon>
        <taxon>Pseudomonadota</taxon>
        <taxon>Gammaproteobacteria</taxon>
        <taxon>Enterobacterales</taxon>
        <taxon>Enterobacteriaceae</taxon>
        <taxon>Shigella</taxon>
    </lineage>
</organism>
<keyword id="KW-0238">DNA-binding</keyword>
<keyword id="KW-1185">Reference proteome</keyword>
<keyword id="KW-0804">Transcription</keyword>
<keyword id="KW-0805">Transcription regulation</keyword>
<protein>
    <recommendedName>
        <fullName evidence="1">HTH-type transcriptional regulator YidZ</fullName>
    </recommendedName>
</protein>
<name>YIDZ_SHISS</name>
<feature type="chain" id="PRO_0000291708" description="HTH-type transcriptional regulator YidZ">
    <location>
        <begin position="1"/>
        <end position="319"/>
    </location>
</feature>
<feature type="domain" description="HTH lysR-type" evidence="1">
    <location>
        <begin position="8"/>
        <end position="65"/>
    </location>
</feature>
<feature type="DNA-binding region" description="H-T-H motif" evidence="1">
    <location>
        <begin position="25"/>
        <end position="44"/>
    </location>
</feature>
<sequence>MKKSITTLDLNLLLCLQLLMQERSVTKAAKRMNVTPSAVSKSLAKLRAWFDDPLFVNSPLGLSPTPLMVSMEQNLAEWMQMSNLLLDKPHHQTPRGLKFELAAESPLMMIMLNALSKRIYQRYPQATIKLRNWDYDSLDAITRGEVDIGFSGRESHPRSRELLSSLPLAIDYEVLFSDVPCVWLRKDHPALHETWNLDTFLRYPHISICWEQSDTWALDNVLQELGRERTIAMSLPEFEQSLFMAAQPDNLLLATAPRYCQYYNQLHQLPLVALPLPFDESQQKKLEVPFTLLWHKRNSHNPKIVWLRETIKNLYASMA</sequence>
<evidence type="ECO:0000255" key="1">
    <source>
        <dbReference type="HAMAP-Rule" id="MF_01607"/>
    </source>
</evidence>
<evidence type="ECO:0000305" key="2"/>
<reference key="1">
    <citation type="journal article" date="2005" name="Nucleic Acids Res.">
        <title>Genome dynamics and diversity of Shigella species, the etiologic agents of bacillary dysentery.</title>
        <authorList>
            <person name="Yang F."/>
            <person name="Yang J."/>
            <person name="Zhang X."/>
            <person name="Chen L."/>
            <person name="Jiang Y."/>
            <person name="Yan Y."/>
            <person name="Tang X."/>
            <person name="Wang J."/>
            <person name="Xiong Z."/>
            <person name="Dong J."/>
            <person name="Xue Y."/>
            <person name="Zhu Y."/>
            <person name="Xu X."/>
            <person name="Sun L."/>
            <person name="Chen S."/>
            <person name="Nie H."/>
            <person name="Peng J."/>
            <person name="Xu J."/>
            <person name="Wang Y."/>
            <person name="Yuan Z."/>
            <person name="Wen Y."/>
            <person name="Yao Z."/>
            <person name="Shen Y."/>
            <person name="Qiang B."/>
            <person name="Hou Y."/>
            <person name="Yu J."/>
            <person name="Jin Q."/>
        </authorList>
    </citation>
    <scope>NUCLEOTIDE SEQUENCE [LARGE SCALE GENOMIC DNA]</scope>
    <source>
        <strain>Ss046</strain>
    </source>
</reference>
<comment type="function">
    <text evidence="1">Involved in anaerobic NO protection.</text>
</comment>
<comment type="similarity">
    <text evidence="2">Belongs to the LysR transcriptional regulatory family.</text>
</comment>
<gene>
    <name evidence="1" type="primary">yidZ</name>
    <name type="ordered locus">SSON_3555</name>
</gene>
<accession>Q3YWK2</accession>
<dbReference type="EMBL" id="CP000038">
    <property type="protein sequence ID" value="AAZ90110.1"/>
    <property type="molecule type" value="Genomic_DNA"/>
</dbReference>
<dbReference type="RefSeq" id="WP_000748502.1">
    <property type="nucleotide sequence ID" value="NC_007384.1"/>
</dbReference>
<dbReference type="SMR" id="Q3YWK2"/>
<dbReference type="GeneID" id="93778452"/>
<dbReference type="KEGG" id="ssn:SSON_3555"/>
<dbReference type="HOGENOM" id="CLU_039613_39_2_6"/>
<dbReference type="Proteomes" id="UP000002529">
    <property type="component" value="Chromosome"/>
</dbReference>
<dbReference type="GO" id="GO:0003677">
    <property type="term" value="F:DNA binding"/>
    <property type="evidence" value="ECO:0007669"/>
    <property type="project" value="UniProtKB-KW"/>
</dbReference>
<dbReference type="GO" id="GO:0003700">
    <property type="term" value="F:DNA-binding transcription factor activity"/>
    <property type="evidence" value="ECO:0007669"/>
    <property type="project" value="UniProtKB-UniRule"/>
</dbReference>
<dbReference type="CDD" id="cd08417">
    <property type="entry name" value="PBP2_Nitroaromatics_like"/>
    <property type="match status" value="1"/>
</dbReference>
<dbReference type="FunFam" id="3.40.190.10:FF:000092">
    <property type="entry name" value="HTH-type transcriptional regulator YidZ"/>
    <property type="match status" value="1"/>
</dbReference>
<dbReference type="Gene3D" id="3.40.190.10">
    <property type="entry name" value="Periplasmic binding protein-like II"/>
    <property type="match status" value="2"/>
</dbReference>
<dbReference type="Gene3D" id="1.10.10.10">
    <property type="entry name" value="Winged helix-like DNA-binding domain superfamily/Winged helix DNA-binding domain"/>
    <property type="match status" value="1"/>
</dbReference>
<dbReference type="HAMAP" id="MF_01607">
    <property type="entry name" value="HTH_type_YidZ"/>
    <property type="match status" value="1"/>
</dbReference>
<dbReference type="InterPro" id="IPR050389">
    <property type="entry name" value="LysR-type_TF"/>
</dbReference>
<dbReference type="InterPro" id="IPR005119">
    <property type="entry name" value="LysR_subst-bd"/>
</dbReference>
<dbReference type="InterPro" id="IPR000847">
    <property type="entry name" value="Tscrpt_reg_HTH_LysR"/>
</dbReference>
<dbReference type="InterPro" id="IPR023746">
    <property type="entry name" value="Tscrpt_reg_YidZ"/>
</dbReference>
<dbReference type="InterPro" id="IPR036388">
    <property type="entry name" value="WH-like_DNA-bd_sf"/>
</dbReference>
<dbReference type="InterPro" id="IPR036390">
    <property type="entry name" value="WH_DNA-bd_sf"/>
</dbReference>
<dbReference type="InterPro" id="IPR037402">
    <property type="entry name" value="YidZ_PBP2"/>
</dbReference>
<dbReference type="NCBIfam" id="NF007581">
    <property type="entry name" value="PRK10216.1"/>
    <property type="match status" value="1"/>
</dbReference>
<dbReference type="PANTHER" id="PTHR30118">
    <property type="entry name" value="HTH-TYPE TRANSCRIPTIONAL REGULATOR LEUO-RELATED"/>
    <property type="match status" value="1"/>
</dbReference>
<dbReference type="PANTHER" id="PTHR30118:SF11">
    <property type="entry name" value="HTH-TYPE TRANSCRIPTIONAL REGULATOR YIDZ"/>
    <property type="match status" value="1"/>
</dbReference>
<dbReference type="Pfam" id="PF00126">
    <property type="entry name" value="HTH_1"/>
    <property type="match status" value="1"/>
</dbReference>
<dbReference type="Pfam" id="PF03466">
    <property type="entry name" value="LysR_substrate"/>
    <property type="match status" value="1"/>
</dbReference>
<dbReference type="SUPFAM" id="SSF53850">
    <property type="entry name" value="Periplasmic binding protein-like II"/>
    <property type="match status" value="1"/>
</dbReference>
<dbReference type="SUPFAM" id="SSF46785">
    <property type="entry name" value="Winged helix' DNA-binding domain"/>
    <property type="match status" value="1"/>
</dbReference>
<dbReference type="PROSITE" id="PS50931">
    <property type="entry name" value="HTH_LYSR"/>
    <property type="match status" value="1"/>
</dbReference>
<proteinExistence type="inferred from homology"/>